<comment type="catalytic activity">
    <reaction evidence="1">
        <text>tRNA(Phe) + L-phenylalanine + ATP = L-phenylalanyl-tRNA(Phe) + AMP + diphosphate + H(+)</text>
        <dbReference type="Rhea" id="RHEA:19413"/>
        <dbReference type="Rhea" id="RHEA-COMP:9668"/>
        <dbReference type="Rhea" id="RHEA-COMP:9699"/>
        <dbReference type="ChEBI" id="CHEBI:15378"/>
        <dbReference type="ChEBI" id="CHEBI:30616"/>
        <dbReference type="ChEBI" id="CHEBI:33019"/>
        <dbReference type="ChEBI" id="CHEBI:58095"/>
        <dbReference type="ChEBI" id="CHEBI:78442"/>
        <dbReference type="ChEBI" id="CHEBI:78531"/>
        <dbReference type="ChEBI" id="CHEBI:456215"/>
        <dbReference type="EC" id="6.1.1.20"/>
    </reaction>
</comment>
<comment type="cofactor">
    <cofactor evidence="1">
        <name>Mg(2+)</name>
        <dbReference type="ChEBI" id="CHEBI:18420"/>
    </cofactor>
    <text evidence="1">Binds 2 magnesium ions per tetramer.</text>
</comment>
<comment type="subunit">
    <text evidence="1">Tetramer of two alpha and two beta subunits.</text>
</comment>
<comment type="subcellular location">
    <subcellularLocation>
        <location evidence="1">Cytoplasm</location>
    </subcellularLocation>
</comment>
<comment type="similarity">
    <text evidence="1">Belongs to the class-II aminoacyl-tRNA synthetase family. Phe-tRNA synthetase alpha subunit type 2 subfamily.</text>
</comment>
<sequence>MLSKIELMLLRSLETGKTYTPEEAAELSGLSKDAVLKAAYMLQERGYVRVIENVRTHYSLTEEGERYLKEGLPEEKLYSLVKSGVNSMDELRKRMGREFQIALGWLRRKGAVEVEGDKVVPKREPSFDERAALQAIKEGRGVDEGTLKTLMKRKLVTKSETKQVYIEVMKKPEIELEDIITDLTPEMLLEGTWRGKQFLKYDITIPAKEIYGGKIHPYERIIEECRKVFLEMGFTEIKGHYVQPAFWNFDALFQPQDHPARDMQDTFYLDRYIDLEGEIVERVKATHENGWITGSTGWGGEWSLEKARQLVLRTHTTAITIHYLAENPEPPQKAFCIDRVYRRETIDATHLPEFDQLEGVVLDRDVGFKHLLGLLKEFFTKMGFEDVRFRPGYFPYTEPSVEPEVYVEGLGWVELGGAGVFRKEVTEPLGIRGKVLAWGLGIGRLAMLKIGLKDLRRLYLPDLGWLRSMPVARK</sequence>
<feature type="chain" id="PRO_0000126807" description="Phenylalanine--tRNA ligase alpha subunit">
    <location>
        <begin position="1"/>
        <end position="474"/>
    </location>
</feature>
<feature type="binding site" evidence="1">
    <location>
        <position position="317"/>
    </location>
    <ligand>
        <name>L-phenylalanine</name>
        <dbReference type="ChEBI" id="CHEBI:58095"/>
    </ligand>
</feature>
<feature type="binding site" evidence="1">
    <location>
        <begin position="356"/>
        <end position="358"/>
    </location>
    <ligand>
        <name>L-phenylalanine</name>
        <dbReference type="ChEBI" id="CHEBI:58095"/>
    </ligand>
</feature>
<feature type="binding site" evidence="1">
    <location>
        <position position="396"/>
    </location>
    <ligand>
        <name>L-phenylalanine</name>
        <dbReference type="ChEBI" id="CHEBI:58095"/>
    </ligand>
</feature>
<feature type="binding site" evidence="1">
    <location>
        <position position="398"/>
    </location>
    <ligand>
        <name>Mg(2+)</name>
        <dbReference type="ChEBI" id="CHEBI:18420"/>
        <note>shared with beta subunit</note>
    </ligand>
</feature>
<feature type="binding site" evidence="1">
    <location>
        <position position="421"/>
    </location>
    <ligand>
        <name>L-phenylalanine</name>
        <dbReference type="ChEBI" id="CHEBI:58095"/>
    </ligand>
</feature>
<proteinExistence type="inferred from homology"/>
<name>SYFA_ARCFU</name>
<reference key="1">
    <citation type="journal article" date="1997" name="Nature">
        <title>The complete genome sequence of the hyperthermophilic, sulphate-reducing archaeon Archaeoglobus fulgidus.</title>
        <authorList>
            <person name="Klenk H.-P."/>
            <person name="Clayton R.A."/>
            <person name="Tomb J.-F."/>
            <person name="White O."/>
            <person name="Nelson K.E."/>
            <person name="Ketchum K.A."/>
            <person name="Dodson R.J."/>
            <person name="Gwinn M.L."/>
            <person name="Hickey E.K."/>
            <person name="Peterson J.D."/>
            <person name="Richardson D.L."/>
            <person name="Kerlavage A.R."/>
            <person name="Graham D.E."/>
            <person name="Kyrpides N.C."/>
            <person name="Fleischmann R.D."/>
            <person name="Quackenbush J."/>
            <person name="Lee N.H."/>
            <person name="Sutton G.G."/>
            <person name="Gill S.R."/>
            <person name="Kirkness E.F."/>
            <person name="Dougherty B.A."/>
            <person name="McKenney K."/>
            <person name="Adams M.D."/>
            <person name="Loftus B.J."/>
            <person name="Peterson S.N."/>
            <person name="Reich C.I."/>
            <person name="McNeil L.K."/>
            <person name="Badger J.H."/>
            <person name="Glodek A."/>
            <person name="Zhou L."/>
            <person name="Overbeek R."/>
            <person name="Gocayne J.D."/>
            <person name="Weidman J.F."/>
            <person name="McDonald L.A."/>
            <person name="Utterback T.R."/>
            <person name="Cotton M.D."/>
            <person name="Spriggs T."/>
            <person name="Artiach P."/>
            <person name="Kaine B.P."/>
            <person name="Sykes S.M."/>
            <person name="Sadow P.W."/>
            <person name="D'Andrea K.P."/>
            <person name="Bowman C."/>
            <person name="Fujii C."/>
            <person name="Garland S.A."/>
            <person name="Mason T.M."/>
            <person name="Olsen G.J."/>
            <person name="Fraser C.M."/>
            <person name="Smith H.O."/>
            <person name="Woese C.R."/>
            <person name="Venter J.C."/>
        </authorList>
    </citation>
    <scope>NUCLEOTIDE SEQUENCE [LARGE SCALE GENOMIC DNA]</scope>
    <source>
        <strain>ATCC 49558 / DSM 4304 / JCM 9628 / NBRC 100126 / VC-16</strain>
    </source>
</reference>
<protein>
    <recommendedName>
        <fullName evidence="1">Phenylalanine--tRNA ligase alpha subunit</fullName>
        <ecNumber evidence="1">6.1.1.20</ecNumber>
    </recommendedName>
    <alternativeName>
        <fullName evidence="1">Phenylalanyl-tRNA synthetase alpha subunit</fullName>
        <shortName evidence="1">PheRS</shortName>
    </alternativeName>
</protein>
<gene>
    <name evidence="1" type="primary">pheS</name>
    <name type="ordered locus">AF_1955</name>
</gene>
<accession>O28324</accession>
<dbReference type="EC" id="6.1.1.20" evidence="1"/>
<dbReference type="EMBL" id="AE000782">
    <property type="protein sequence ID" value="AAB89300.1"/>
    <property type="molecule type" value="Genomic_DNA"/>
</dbReference>
<dbReference type="PIR" id="B69494">
    <property type="entry name" value="B69494"/>
</dbReference>
<dbReference type="RefSeq" id="WP_010879447.1">
    <property type="nucleotide sequence ID" value="NC_000917.1"/>
</dbReference>
<dbReference type="SMR" id="O28324"/>
<dbReference type="STRING" id="224325.AF_1955"/>
<dbReference type="PaxDb" id="224325-AF_1955"/>
<dbReference type="EnsemblBacteria" id="AAB89300">
    <property type="protein sequence ID" value="AAB89300"/>
    <property type="gene ID" value="AF_1955"/>
</dbReference>
<dbReference type="GeneID" id="1485176"/>
<dbReference type="KEGG" id="afu:AF_1955"/>
<dbReference type="eggNOG" id="arCOG00410">
    <property type="taxonomic scope" value="Archaea"/>
</dbReference>
<dbReference type="HOGENOM" id="CLU_025086_2_2_2"/>
<dbReference type="OrthoDB" id="372178at2157"/>
<dbReference type="PhylomeDB" id="O28324"/>
<dbReference type="Proteomes" id="UP000002199">
    <property type="component" value="Chromosome"/>
</dbReference>
<dbReference type="GO" id="GO:0005737">
    <property type="term" value="C:cytoplasm"/>
    <property type="evidence" value="ECO:0007669"/>
    <property type="project" value="UniProtKB-SubCell"/>
</dbReference>
<dbReference type="GO" id="GO:0005524">
    <property type="term" value="F:ATP binding"/>
    <property type="evidence" value="ECO:0007669"/>
    <property type="project" value="UniProtKB-UniRule"/>
</dbReference>
<dbReference type="GO" id="GO:0000287">
    <property type="term" value="F:magnesium ion binding"/>
    <property type="evidence" value="ECO:0007669"/>
    <property type="project" value="UniProtKB-UniRule"/>
</dbReference>
<dbReference type="GO" id="GO:0004826">
    <property type="term" value="F:phenylalanine-tRNA ligase activity"/>
    <property type="evidence" value="ECO:0007669"/>
    <property type="project" value="UniProtKB-UniRule"/>
</dbReference>
<dbReference type="GO" id="GO:0000049">
    <property type="term" value="F:tRNA binding"/>
    <property type="evidence" value="ECO:0007669"/>
    <property type="project" value="InterPro"/>
</dbReference>
<dbReference type="GO" id="GO:0006432">
    <property type="term" value="P:phenylalanyl-tRNA aminoacylation"/>
    <property type="evidence" value="ECO:0007669"/>
    <property type="project" value="UniProtKB-UniRule"/>
</dbReference>
<dbReference type="CDD" id="cd00496">
    <property type="entry name" value="PheRS_alpha_core"/>
    <property type="match status" value="1"/>
</dbReference>
<dbReference type="FunFam" id="3.30.930.10:FF:000095">
    <property type="entry name" value="Phenylalanine--tRNA ligase alpha subunit"/>
    <property type="match status" value="1"/>
</dbReference>
<dbReference type="Gene3D" id="1.10.10.2320">
    <property type="match status" value="1"/>
</dbReference>
<dbReference type="Gene3D" id="1.10.10.2330">
    <property type="match status" value="1"/>
</dbReference>
<dbReference type="Gene3D" id="3.30.1370.240">
    <property type="match status" value="1"/>
</dbReference>
<dbReference type="Gene3D" id="3.30.930.10">
    <property type="entry name" value="Bira Bifunctional Protein, Domain 2"/>
    <property type="match status" value="1"/>
</dbReference>
<dbReference type="HAMAP" id="MF_00282">
    <property type="entry name" value="Phe_tRNA_synth_alpha2"/>
    <property type="match status" value="1"/>
</dbReference>
<dbReference type="InterPro" id="IPR006195">
    <property type="entry name" value="aa-tRNA-synth_II"/>
</dbReference>
<dbReference type="InterPro" id="IPR045864">
    <property type="entry name" value="aa-tRNA-synth_II/BPL/LPL"/>
</dbReference>
<dbReference type="InterPro" id="IPR004529">
    <property type="entry name" value="Phe-tRNA-synth_IIc_asu"/>
</dbReference>
<dbReference type="InterPro" id="IPR022917">
    <property type="entry name" value="Phe_tRNA_ligase_alpha_bac/arc"/>
</dbReference>
<dbReference type="InterPro" id="IPR002319">
    <property type="entry name" value="Phenylalanyl-tRNA_Synthase"/>
</dbReference>
<dbReference type="InterPro" id="IPR036390">
    <property type="entry name" value="WH_DNA-bd_sf"/>
</dbReference>
<dbReference type="NCBIfam" id="TIGR00468">
    <property type="entry name" value="pheS"/>
    <property type="match status" value="1"/>
</dbReference>
<dbReference type="NCBIfam" id="NF003210">
    <property type="entry name" value="PRK04172.1"/>
    <property type="match status" value="1"/>
</dbReference>
<dbReference type="PANTHER" id="PTHR11538:SF40">
    <property type="entry name" value="PHENYLALANINE--TRNA LIGASE ALPHA SUBUNIT"/>
    <property type="match status" value="1"/>
</dbReference>
<dbReference type="PANTHER" id="PTHR11538">
    <property type="entry name" value="PHENYLALANYL-TRNA SYNTHETASE"/>
    <property type="match status" value="1"/>
</dbReference>
<dbReference type="Pfam" id="PF01409">
    <property type="entry name" value="tRNA-synt_2d"/>
    <property type="match status" value="1"/>
</dbReference>
<dbReference type="SUPFAM" id="SSF55681">
    <property type="entry name" value="Class II aaRS and biotin synthetases"/>
    <property type="match status" value="1"/>
</dbReference>
<dbReference type="SUPFAM" id="SSF46785">
    <property type="entry name" value="Winged helix' DNA-binding domain"/>
    <property type="match status" value="1"/>
</dbReference>
<dbReference type="PROSITE" id="PS50862">
    <property type="entry name" value="AA_TRNA_LIGASE_II"/>
    <property type="match status" value="1"/>
</dbReference>
<evidence type="ECO:0000255" key="1">
    <source>
        <dbReference type="HAMAP-Rule" id="MF_00282"/>
    </source>
</evidence>
<organism>
    <name type="scientific">Archaeoglobus fulgidus (strain ATCC 49558 / DSM 4304 / JCM 9628 / NBRC 100126 / VC-16)</name>
    <dbReference type="NCBI Taxonomy" id="224325"/>
    <lineage>
        <taxon>Archaea</taxon>
        <taxon>Methanobacteriati</taxon>
        <taxon>Methanobacteriota</taxon>
        <taxon>Archaeoglobi</taxon>
        <taxon>Archaeoglobales</taxon>
        <taxon>Archaeoglobaceae</taxon>
        <taxon>Archaeoglobus</taxon>
    </lineage>
</organism>
<keyword id="KW-0030">Aminoacyl-tRNA synthetase</keyword>
<keyword id="KW-0067">ATP-binding</keyword>
<keyword id="KW-0963">Cytoplasm</keyword>
<keyword id="KW-0436">Ligase</keyword>
<keyword id="KW-0460">Magnesium</keyword>
<keyword id="KW-0479">Metal-binding</keyword>
<keyword id="KW-0547">Nucleotide-binding</keyword>
<keyword id="KW-0648">Protein biosynthesis</keyword>
<keyword id="KW-1185">Reference proteome</keyword>